<dbReference type="EMBL" id="CP000753">
    <property type="protein sequence ID" value="ABS08276.1"/>
    <property type="molecule type" value="Genomic_DNA"/>
</dbReference>
<dbReference type="RefSeq" id="WP_012089188.1">
    <property type="nucleotide sequence ID" value="NC_009665.1"/>
</dbReference>
<dbReference type="SMR" id="A6WN87"/>
<dbReference type="KEGG" id="sbm:Shew185_2134"/>
<dbReference type="HOGENOM" id="CLU_028163_0_0_6"/>
<dbReference type="GO" id="GO:0008832">
    <property type="term" value="F:dGTPase activity"/>
    <property type="evidence" value="ECO:0007669"/>
    <property type="project" value="TreeGrafter"/>
</dbReference>
<dbReference type="GO" id="GO:0006203">
    <property type="term" value="P:dGTP catabolic process"/>
    <property type="evidence" value="ECO:0007669"/>
    <property type="project" value="TreeGrafter"/>
</dbReference>
<dbReference type="CDD" id="cd00077">
    <property type="entry name" value="HDc"/>
    <property type="match status" value="1"/>
</dbReference>
<dbReference type="FunFam" id="1.10.3210.10:FF:000040">
    <property type="entry name" value="Deoxyguanosinetriphosphate triphosphohydrolase-like protein"/>
    <property type="match status" value="1"/>
</dbReference>
<dbReference type="Gene3D" id="1.10.3210.10">
    <property type="entry name" value="Hypothetical protein af1432"/>
    <property type="match status" value="2"/>
</dbReference>
<dbReference type="HAMAP" id="MF_01212">
    <property type="entry name" value="dGTPase_type2"/>
    <property type="match status" value="1"/>
</dbReference>
<dbReference type="InterPro" id="IPR006261">
    <property type="entry name" value="dGTPase"/>
</dbReference>
<dbReference type="InterPro" id="IPR050135">
    <property type="entry name" value="dGTPase-like"/>
</dbReference>
<dbReference type="InterPro" id="IPR023023">
    <property type="entry name" value="dNTPase_2"/>
</dbReference>
<dbReference type="InterPro" id="IPR003607">
    <property type="entry name" value="HD/PDEase_dom"/>
</dbReference>
<dbReference type="InterPro" id="IPR006674">
    <property type="entry name" value="HD_domain"/>
</dbReference>
<dbReference type="InterPro" id="IPR026875">
    <property type="entry name" value="PHydrolase_assoc_dom"/>
</dbReference>
<dbReference type="NCBIfam" id="NF041026">
    <property type="entry name" value="antiphage_dGTPase"/>
    <property type="match status" value="1"/>
</dbReference>
<dbReference type="NCBIfam" id="TIGR01353">
    <property type="entry name" value="dGTP_triPase"/>
    <property type="match status" value="1"/>
</dbReference>
<dbReference type="NCBIfam" id="NF003701">
    <property type="entry name" value="PRK05318.1"/>
    <property type="match status" value="1"/>
</dbReference>
<dbReference type="PANTHER" id="PTHR11373:SF40">
    <property type="entry name" value="DEOXYGUANOSINETRIPHOSPHATE TRIPHOSPHOHYDROLASE-LIKE PROTEIN 2"/>
    <property type="match status" value="1"/>
</dbReference>
<dbReference type="PANTHER" id="PTHR11373">
    <property type="entry name" value="DEOXYNUCLEOSIDE TRIPHOSPHATE TRIPHOSPHOHYDROLASE"/>
    <property type="match status" value="1"/>
</dbReference>
<dbReference type="Pfam" id="PF01966">
    <property type="entry name" value="HD"/>
    <property type="match status" value="1"/>
</dbReference>
<dbReference type="Pfam" id="PF13286">
    <property type="entry name" value="HD_assoc"/>
    <property type="match status" value="1"/>
</dbReference>
<dbReference type="SMART" id="SM00471">
    <property type="entry name" value="HDc"/>
    <property type="match status" value="1"/>
</dbReference>
<dbReference type="SUPFAM" id="SSF109604">
    <property type="entry name" value="HD-domain/PDEase-like"/>
    <property type="match status" value="1"/>
</dbReference>
<dbReference type="PROSITE" id="PS51831">
    <property type="entry name" value="HD"/>
    <property type="match status" value="1"/>
</dbReference>
<evidence type="ECO:0000255" key="1">
    <source>
        <dbReference type="HAMAP-Rule" id="MF_01212"/>
    </source>
</evidence>
<evidence type="ECO:0000255" key="2">
    <source>
        <dbReference type="PROSITE-ProRule" id="PRU01175"/>
    </source>
</evidence>
<evidence type="ECO:0000256" key="3">
    <source>
        <dbReference type="SAM" id="MobiDB-lite"/>
    </source>
</evidence>
<protein>
    <recommendedName>
        <fullName evidence="1">Deoxyguanosinetriphosphate triphosphohydrolase-like protein</fullName>
    </recommendedName>
</protein>
<keyword id="KW-0378">Hydrolase</keyword>
<organism>
    <name type="scientific">Shewanella baltica (strain OS185)</name>
    <dbReference type="NCBI Taxonomy" id="402882"/>
    <lineage>
        <taxon>Bacteria</taxon>
        <taxon>Pseudomonadati</taxon>
        <taxon>Pseudomonadota</taxon>
        <taxon>Gammaproteobacteria</taxon>
        <taxon>Alteromonadales</taxon>
        <taxon>Shewanellaceae</taxon>
        <taxon>Shewanella</taxon>
    </lineage>
</organism>
<sequence length="449" mass="51317">MTSSVWQERRHGEDKQRRNDHRSPYQRDRARILHSAAFRRLQAKTQVLGVGMNDFYRTRLTHSLEVSQIGTGIAAQLRRKYPQHKQLLCSMSLLESLCLAHDIGHPPFGHGGEVALNYMMRDHGGFEGNGQTFRILSKLEPYTLDFGMNLCRRTMLGILKYPAPHSKLFVAGKHSEITNHRQLKPSQWPPVKGIFDDDNDIFAWVLEPLSEADRSRFTSTQQGSHPALHHYPHLRTQFKSFDCSIMELADDIAYAVHDLEDAIVMGIVTASQWHQDVAPTLTNSGDAWIRQELADIGNKLFSHEHHLRKDAIGTLVNGFVTAIVISEDDVFEEPLLRFNATLEPEFAIALNVLKQLVYKYVIRKPEIQMLEYKGQQIVMGLFEAFASDPERLLPLNTQERWRESEQQGLNSHRVLADYISGMTDEFAGRLYQQLFSPKAGSNVELSKEM</sequence>
<gene>
    <name type="ordered locus">Shew185_2134</name>
</gene>
<comment type="similarity">
    <text evidence="1">Belongs to the dGTPase family. Type 2 subfamily.</text>
</comment>
<proteinExistence type="inferred from homology"/>
<reference key="1">
    <citation type="submission" date="2007-07" db="EMBL/GenBank/DDBJ databases">
        <title>Complete sequence of chromosome of Shewanella baltica OS185.</title>
        <authorList>
            <consortium name="US DOE Joint Genome Institute"/>
            <person name="Copeland A."/>
            <person name="Lucas S."/>
            <person name="Lapidus A."/>
            <person name="Barry K."/>
            <person name="Glavina del Rio T."/>
            <person name="Dalin E."/>
            <person name="Tice H."/>
            <person name="Pitluck S."/>
            <person name="Sims D."/>
            <person name="Brettin T."/>
            <person name="Bruce D."/>
            <person name="Detter J.C."/>
            <person name="Han C."/>
            <person name="Schmutz J."/>
            <person name="Larimer F."/>
            <person name="Land M."/>
            <person name="Hauser L."/>
            <person name="Kyrpides N."/>
            <person name="Mikhailova N."/>
            <person name="Brettar I."/>
            <person name="Rodrigues J."/>
            <person name="Konstantinidis K."/>
            <person name="Tiedje J."/>
            <person name="Richardson P."/>
        </authorList>
    </citation>
    <scope>NUCLEOTIDE SEQUENCE [LARGE SCALE GENOMIC DNA]</scope>
    <source>
        <strain>OS185</strain>
    </source>
</reference>
<feature type="chain" id="PRO_1000138926" description="Deoxyguanosinetriphosphate triphosphohydrolase-like protein">
    <location>
        <begin position="1"/>
        <end position="449"/>
    </location>
</feature>
<feature type="domain" description="HD" evidence="2">
    <location>
        <begin position="59"/>
        <end position="255"/>
    </location>
</feature>
<feature type="region of interest" description="Disordered" evidence="3">
    <location>
        <begin position="1"/>
        <end position="27"/>
    </location>
</feature>
<feature type="compositionally biased region" description="Basic and acidic residues" evidence="3">
    <location>
        <begin position="7"/>
        <end position="27"/>
    </location>
</feature>
<accession>A6WN87</accession>
<name>DGTL1_SHEB8</name>